<organism>
    <name type="scientific">Phytophthora infestans</name>
    <name type="common">Potato late blight agent</name>
    <name type="synonym">Botrytis infestans</name>
    <dbReference type="NCBI Taxonomy" id="4787"/>
    <lineage>
        <taxon>Eukaryota</taxon>
        <taxon>Sar</taxon>
        <taxon>Stramenopiles</taxon>
        <taxon>Oomycota</taxon>
        <taxon>Peronosporales</taxon>
        <taxon>Peronosporaceae</taxon>
        <taxon>Phytophthora</taxon>
    </lineage>
</organism>
<keyword id="KW-0325">Glycoprotein</keyword>
<keyword id="KW-1048">Host nucleus</keyword>
<keyword id="KW-0418">Kinase</keyword>
<keyword id="KW-0597">Phosphoprotein</keyword>
<keyword id="KW-0964">Secreted</keyword>
<keyword id="KW-0723">Serine/threonine-protein kinase</keyword>
<keyword id="KW-0732">Signal</keyword>
<keyword id="KW-0808">Transferase</keyword>
<keyword id="KW-0843">Virulence</keyword>
<evidence type="ECO:0000255" key="1"/>
<evidence type="ECO:0000255" key="2">
    <source>
        <dbReference type="PROSITE-ProRule" id="PRU00159"/>
    </source>
</evidence>
<evidence type="ECO:0000255" key="3">
    <source>
        <dbReference type="PROSITE-ProRule" id="PRU00498"/>
    </source>
</evidence>
<evidence type="ECO:0000256" key="4">
    <source>
        <dbReference type="SAM" id="MobiDB-lite"/>
    </source>
</evidence>
<evidence type="ECO:0000269" key="5">
    <source>
    </source>
</evidence>
<evidence type="ECO:0000269" key="6">
    <source>
    </source>
</evidence>
<evidence type="ECO:0000269" key="7">
    <source>
    </source>
</evidence>
<evidence type="ECO:0000303" key="8">
    <source>
    </source>
</evidence>
<evidence type="ECO:0000305" key="9"/>
<evidence type="ECO:0000305" key="10">
    <source>
    </source>
</evidence>
<evidence type="ECO:0000305" key="11">
    <source>
    </source>
</evidence>
<protein>
    <recommendedName>
        <fullName evidence="8">Crinkler effector protein 8</fullName>
        <ecNumber evidence="7">2.7.11.1</ecNumber>
    </recommendedName>
</protein>
<sequence>MVTLFCAVVGVAGSTFPVDINENKSVGHLKKAIKEEKMYQFPADELQLFLAKAGGNAWLSSLTEDVKKLKKGEKTALVKSLTQEEKELQGEDPISECLEGMDPPKVKQIHVLVALPPGTSSAPISDGTDLWLSRFQHSEVAKLTLLPTRGDLNEFIGQPLPVKIGLPQSVFQAWSSPLILGQLLRDKLFELNDISPCEFLKDSVFSAAFLYPQVDGDATESAFHYFWDSIIRVVLGFVFRRAYVNRDSSRKSSSGLKRPDFLFALDHICVFRGEEKEPRTSITVPREELSKKLVWSYGGVPYVFGYAASGFELELFAIYQDVTGNVKTHLIGGFNLQHAPERFRLVLALLNLCLLFPAIVQNCPASAGTEFMDIHRANGVKVRLSPIFVDKIFHTQEEYRRVKQIYDSLKAYGVPCADAVVTVDSDQLRLTLKPRGIEMKPCSLSELFVALGNVLEALVVLHRNGWMHRDIRWSNVIKHIDRVEWFLIDFADAAQSPQKYPSGDHLTHDEHASDIFMEGGSHTTAVDLWAVGYLVKTSKIEREWTAEPERALFLDRLMNPDPSARPTADEALQLLSRFEREAAEQESQGKGVRKKHRRA</sequence>
<name>CRN8_PHYIN</name>
<proteinExistence type="evidence at protein level"/>
<reference key="1">
    <citation type="journal article" date="2006" name="Fungal Genet. Biol.">
        <title>Computational and comparative analyses of 150 full-length cDNA sequences from the oomycete plant pathogen Phytophthora infestans.</title>
        <authorList>
            <person name="Win J."/>
            <person name="Kanneganti T.D."/>
            <person name="Torto-Alalibo T."/>
            <person name="Kamoun S."/>
        </authorList>
    </citation>
    <scope>NUCLEOTIDE SEQUENCE [MRNA]</scope>
    <source>
        <strain>Isolate 88069</strain>
    </source>
</reference>
<reference key="2">
    <citation type="journal article" date="2009" name="Nature">
        <title>Genome sequence and analysis of the Irish potato famine pathogen Phytophthora infestans.</title>
        <authorList>
            <consortium name="The Broad Institute Genome Sequencing Platform"/>
            <person name="Haas B.J."/>
            <person name="Kamoun S."/>
            <person name="Zody M.C."/>
            <person name="Jiang R.H."/>
            <person name="Handsaker R.E."/>
            <person name="Cano L.M."/>
            <person name="Grabherr M."/>
            <person name="Kodira C.D."/>
            <person name="Raffaele S."/>
            <person name="Torto-Alalibo T."/>
            <person name="Bozkurt T.O."/>
            <person name="Ah-Fong A.M."/>
            <person name="Alvarado L."/>
            <person name="Anderson V.L."/>
            <person name="Armstrong M.R."/>
            <person name="Avrova A."/>
            <person name="Baxter L."/>
            <person name="Beynon J."/>
            <person name="Boevink P.C."/>
            <person name="Bollmann S.R."/>
            <person name="Bos J.I."/>
            <person name="Bulone V."/>
            <person name="Cai G."/>
            <person name="Cakir C."/>
            <person name="Carrington J.C."/>
            <person name="Chawner M."/>
            <person name="Conti L."/>
            <person name="Costanzo S."/>
            <person name="Ewan R."/>
            <person name="Fahlgren N."/>
            <person name="Fischbach M.A."/>
            <person name="Fugelstad J."/>
            <person name="Gilroy E.M."/>
            <person name="Gnerre S."/>
            <person name="Green P.J."/>
            <person name="Grenville-Briggs L.J."/>
            <person name="Griffith J."/>
            <person name="Grunwald N.J."/>
            <person name="Horn K."/>
            <person name="Horner N.R."/>
            <person name="Hu C.H."/>
            <person name="Huitema E."/>
            <person name="Jeong D.H."/>
            <person name="Jones A.M."/>
            <person name="Jones J.D."/>
            <person name="Jones R.W."/>
            <person name="Karlsson E.K."/>
            <person name="Kunjeti S.G."/>
            <person name="Lamour K."/>
            <person name="Liu Z."/>
            <person name="Ma L."/>
            <person name="Maclean D."/>
            <person name="Chibucos M.C."/>
            <person name="McDonald H."/>
            <person name="McWalters J."/>
            <person name="Meijer H.J."/>
            <person name="Morgan W."/>
            <person name="Morris P.F."/>
            <person name="Munro C.A."/>
            <person name="O'Neill K."/>
            <person name="Ospina-Giraldo M."/>
            <person name="Pinzon A."/>
            <person name="Pritchard L."/>
            <person name="Ramsahoye B."/>
            <person name="Ren Q."/>
            <person name="Restrepo S."/>
            <person name="Roy S."/>
            <person name="Sadanandom A."/>
            <person name="Savidor A."/>
            <person name="Schornack S."/>
            <person name="Schwartz D.C."/>
            <person name="Schumann U.D."/>
            <person name="Schwessinger B."/>
            <person name="Seyer L."/>
            <person name="Sharpe T."/>
            <person name="Silvar C."/>
            <person name="Song J."/>
            <person name="Studholme D.J."/>
            <person name="Sykes S."/>
            <person name="Thines M."/>
            <person name="van de Vondervoort P.J."/>
            <person name="Phuntumart V."/>
            <person name="Wawra S."/>
            <person name="Weide R."/>
            <person name="Win J."/>
            <person name="Young C."/>
            <person name="Zhou S."/>
            <person name="Fry W."/>
            <person name="Meyers B.C."/>
            <person name="van West P."/>
            <person name="Ristaino J."/>
            <person name="Govers F."/>
            <person name="Birch P.R."/>
            <person name="Whisson S.C."/>
            <person name="Judelson H.S."/>
            <person name="Nusbaum C."/>
        </authorList>
    </citation>
    <scope>DOMAIN</scope>
    <scope>FUNCTION</scope>
</reference>
<reference key="3">
    <citation type="journal article" date="2012" name="PLoS Pathog.">
        <title>The Irish potato famine pathogen Phytophthora infestans translocates the CRN8 kinase into host plant cells.</title>
        <authorList>
            <person name="van Damme M."/>
            <person name="Bozkurt T.O."/>
            <person name="Cakir C."/>
            <person name="Schornack S."/>
            <person name="Sklenar J."/>
            <person name="Jones A.M."/>
            <person name="Kamoun S."/>
        </authorList>
    </citation>
    <scope>DOMAIN</scope>
    <scope>FUNCTION</scope>
    <scope>SUBCELLULAR LOCATION</scope>
    <scope>CATALYTIC ACTIVITY</scope>
    <scope>ACTIVE SITE</scope>
    <scope>PHOSPHORYLATION AT SER-249; SER-281; SER-385; SER-474 AND SER-587</scope>
    <scope>MUTAGENESIS OF SER-249; SER-281; SER-385; ARG-469; ASP-470; SER-474 AND SER-587</scope>
    <scope>SUBUNIT</scope>
</reference>
<reference key="4">
    <citation type="journal article" date="2010" name="Proc. Natl. Acad. Sci. U.S.A.">
        <title>Ancient class of translocated oomycete effectors targets the host nucleus.</title>
        <authorList>
            <person name="Schornack S."/>
            <person name="van Damme M."/>
            <person name="Bozkurt T.O."/>
            <person name="Cano L.M."/>
            <person name="Smoker M."/>
            <person name="Thines M."/>
            <person name="Gaulin E."/>
            <person name="Kamoun S."/>
            <person name="Huitema E."/>
        </authorList>
    </citation>
    <scope>DOMAIN</scope>
    <scope>SUBCELLULAR LOCATION</scope>
    <scope>FUNCTION</scope>
</reference>
<comment type="function">
    <text evidence="5 6 7">Secreted effector that induces cell death when expressed in host plants (PubMed:19741609, PubMed:20847293, PubMed:22927814). Acts as a kinase and is able to autophosphorylate, however its cell death inducing ability is not a direct result of its kinase activity, but rather a consequence of the phosphorylated state of the five identified serine residues in the CRN8 protein (PubMed:22927814).</text>
</comment>
<comment type="catalytic activity">
    <reaction evidence="7">
        <text>L-seryl-[protein] + ATP = O-phospho-L-seryl-[protein] + ADP + H(+)</text>
        <dbReference type="Rhea" id="RHEA:17989"/>
        <dbReference type="Rhea" id="RHEA-COMP:9863"/>
        <dbReference type="Rhea" id="RHEA-COMP:11604"/>
        <dbReference type="ChEBI" id="CHEBI:15378"/>
        <dbReference type="ChEBI" id="CHEBI:29999"/>
        <dbReference type="ChEBI" id="CHEBI:30616"/>
        <dbReference type="ChEBI" id="CHEBI:83421"/>
        <dbReference type="ChEBI" id="CHEBI:456216"/>
        <dbReference type="EC" id="2.7.11.1"/>
    </reaction>
</comment>
<comment type="catalytic activity">
    <reaction evidence="10">
        <text>L-threonyl-[protein] + ATP = O-phospho-L-threonyl-[protein] + ADP + H(+)</text>
        <dbReference type="Rhea" id="RHEA:46608"/>
        <dbReference type="Rhea" id="RHEA-COMP:11060"/>
        <dbReference type="Rhea" id="RHEA-COMP:11605"/>
        <dbReference type="ChEBI" id="CHEBI:15378"/>
        <dbReference type="ChEBI" id="CHEBI:30013"/>
        <dbReference type="ChEBI" id="CHEBI:30616"/>
        <dbReference type="ChEBI" id="CHEBI:61977"/>
        <dbReference type="ChEBI" id="CHEBI:456216"/>
        <dbReference type="EC" id="2.7.11.1"/>
    </reaction>
</comment>
<comment type="subunit">
    <text evidence="7">Dimerizes in host plants.</text>
</comment>
<comment type="subcellular location">
    <subcellularLocation>
        <location evidence="6">Secreted</location>
    </subcellularLocation>
    <subcellularLocation>
        <location evidence="6">Host nucleus</location>
    </subcellularLocation>
</comment>
<comment type="domain">
    <text evidence="6">The CRN proteins have modular architectures that include a signal peptide, a conserved N-terminus, and highly diverse C-terminal domains. The conserved CRN N-terminus harbors a distinct LXLFLAK motif, which is followed by the conserved DWL domain. A highly conserved HVLVXXP motif marks the end of the CRN N-terminal domains and forms a junction where diverse C-terminal effector domains are fused. The conserved CRN N-terminus mediates the translocation into the plant host cells.</text>
</comment>
<comment type="domain">
    <text evidence="5 7">The whole D2 effector domain that contains a protein functional kinase domain, as well as the C-terminal NLS are required for cell death induction.</text>
</comment>
<comment type="PTM">
    <text evidence="7">Autophosphorylated at Ser-249, Ser-281, Ser-385, Ser-474 and Ser-587. Additional serines or threonines are also targeted for phosphorylation.</text>
</comment>
<comment type="similarity">
    <text evidence="9">In the N-terminal section; belongs to the Crinkler effector family.</text>
</comment>
<comment type="similarity">
    <text evidence="9">In the C-terminal section; belongs to the protein kinase superfamily.</text>
</comment>
<accession>Q2M405</accession>
<gene>
    <name evidence="8" type="primary">CRN8</name>
</gene>
<feature type="signal peptide" evidence="1">
    <location>
        <begin position="1"/>
        <end position="17"/>
    </location>
</feature>
<feature type="chain" id="PRO_0000447409" description="Crinkler effector protein 8">
    <location>
        <begin position="18"/>
        <end position="599"/>
    </location>
</feature>
<feature type="domain" description="Protein kinase" evidence="2 7">
    <location>
        <begin position="289"/>
        <end position="590"/>
    </location>
</feature>
<feature type="region of interest" description="LQLFLAK domain" evidence="11">
    <location>
        <begin position="18"/>
        <end position="52"/>
    </location>
</feature>
<feature type="region of interest" description="DWL domain" evidence="11">
    <location>
        <begin position="53"/>
        <end position="109"/>
    </location>
</feature>
<feature type="region of interest" description="C-terminal D2 effector domain" evidence="11">
    <location>
        <begin position="117"/>
        <end position="590"/>
    </location>
</feature>
<feature type="region of interest" description="Disordered" evidence="4">
    <location>
        <begin position="577"/>
        <end position="599"/>
    </location>
</feature>
<feature type="short sequence motif" description="HVLVXXP motif" evidence="11">
    <location>
        <begin position="110"/>
        <end position="116"/>
    </location>
</feature>
<feature type="short sequence motif" description="Host nuclear localization signal" evidence="7">
    <location>
        <begin position="590"/>
        <end position="599"/>
    </location>
</feature>
<feature type="active site" description="Proton acceptor" evidence="7">
    <location>
        <position position="470"/>
    </location>
</feature>
<feature type="modified residue" description="Phosphoserine" evidence="7">
    <location>
        <position position="249"/>
    </location>
</feature>
<feature type="modified residue" description="Phosphoserine" evidence="7">
    <location>
        <position position="281"/>
    </location>
</feature>
<feature type="modified residue" description="Phosphoserine" evidence="7">
    <location>
        <position position="385"/>
    </location>
</feature>
<feature type="modified residue" description="Phosphoserine" evidence="7">
    <location>
        <position position="474"/>
    </location>
</feature>
<feature type="modified residue" description="Phosphoserine" evidence="7">
    <location>
        <position position="587"/>
    </location>
</feature>
<feature type="glycosylation site" description="N-linked (GlcNAc...) asparagine" evidence="3">
    <location>
        <position position="23"/>
    </location>
</feature>
<feature type="mutagenesis site" description="Impairs host cell death induction; when associated with A-281, A-385, A-474 and A-587." evidence="7">
    <original>S</original>
    <variation>A</variation>
    <location>
        <position position="249"/>
    </location>
</feature>
<feature type="mutagenesis site" description="Impairs host cell death induction; when associated with A-249, A-385, A-474 and A-587." evidence="7">
    <original>S</original>
    <variation>A</variation>
    <location>
        <position position="281"/>
    </location>
</feature>
<feature type="mutagenesis site" description="Impairs host cell death induction; when associated with A-249, A-281, A-474 and A-587." evidence="7">
    <original>S</original>
    <variation>A</variation>
    <location>
        <position position="385"/>
    </location>
</feature>
<feature type="mutagenesis site" description="Destabilizes the CRN8 protein and impairs autophosphorylation and host cell death induction; when associated with A-470." evidence="7">
    <original>R</original>
    <variation>A</variation>
    <location>
        <position position="469"/>
    </location>
</feature>
<feature type="mutagenesis site" description="Destabilizes the CRN8 protein and impairs autophosphorylation and host cell death induction; when associated with A-469." evidence="7">
    <original>D</original>
    <variation>A</variation>
    <location>
        <position position="470"/>
    </location>
</feature>
<feature type="mutagenesis site" description="Impairs autophosphorylation but does not affect host cell death induction." evidence="7">
    <original>D</original>
    <variation>A</variation>
    <location>
        <position position="470"/>
    </location>
</feature>
<feature type="mutagenesis site" description="Impairs host cell death induction; when associated with A-249, A-291, A-385 and A-587." evidence="7">
    <original>S</original>
    <variation>A</variation>
    <location>
        <position position="474"/>
    </location>
</feature>
<feature type="mutagenesis site" description="Impairs host cell death induction; when associated with A-249, A-291, A-385 and A-474." evidence="7">
    <original>S</original>
    <variation>A</variation>
    <location>
        <position position="587"/>
    </location>
</feature>
<dbReference type="EC" id="2.7.11.1" evidence="7"/>
<dbReference type="EMBL" id="AY961456">
    <property type="protein sequence ID" value="AAY43402.1"/>
    <property type="molecule type" value="mRNA"/>
</dbReference>
<dbReference type="SMR" id="Q2M405"/>
<dbReference type="GlyCosmos" id="Q2M405">
    <property type="glycosylation" value="1 site, No reported glycans"/>
</dbReference>
<dbReference type="iPTMnet" id="Q2M405"/>
<dbReference type="VEuPathDB" id="FungiDB:PITG_12094"/>
<dbReference type="GO" id="GO:0005576">
    <property type="term" value="C:extracellular region"/>
    <property type="evidence" value="ECO:0007669"/>
    <property type="project" value="UniProtKB-SubCell"/>
</dbReference>
<dbReference type="GO" id="GO:0042025">
    <property type="term" value="C:host cell nucleus"/>
    <property type="evidence" value="ECO:0007669"/>
    <property type="project" value="UniProtKB-SubCell"/>
</dbReference>
<dbReference type="GO" id="GO:0106310">
    <property type="term" value="F:protein serine kinase activity"/>
    <property type="evidence" value="ECO:0007669"/>
    <property type="project" value="RHEA"/>
</dbReference>
<dbReference type="GO" id="GO:0004674">
    <property type="term" value="F:protein serine/threonine kinase activity"/>
    <property type="evidence" value="ECO:0007669"/>
    <property type="project" value="UniProtKB-KW"/>
</dbReference>
<dbReference type="Gene3D" id="1.10.510.10">
    <property type="entry name" value="Transferase(Phosphotransferase) domain 1"/>
    <property type="match status" value="1"/>
</dbReference>
<dbReference type="InterPro" id="IPR045379">
    <property type="entry name" value="Crinkler_N"/>
</dbReference>
<dbReference type="InterPro" id="IPR011009">
    <property type="entry name" value="Kinase-like_dom_sf"/>
</dbReference>
<dbReference type="Pfam" id="PF20147">
    <property type="entry name" value="Crinkler"/>
    <property type="match status" value="1"/>
</dbReference>
<dbReference type="SUPFAM" id="SSF56112">
    <property type="entry name" value="Protein kinase-like (PK-like)"/>
    <property type="match status" value="1"/>
</dbReference>